<keyword id="KW-0677">Repeat</keyword>
<keyword id="KW-0686">Riboflavin biosynthesis</keyword>
<keyword id="KW-0808">Transferase</keyword>
<protein>
    <recommendedName>
        <fullName>Riboflavin synthase</fullName>
        <shortName>RS</shortName>
        <ecNumber>2.5.1.9</ecNumber>
    </recommendedName>
</protein>
<gene>
    <name type="primary">ribE</name>
    <name type="ordered locus">BUsg_104</name>
</gene>
<organism>
    <name type="scientific">Buchnera aphidicola subsp. Schizaphis graminum (strain Sg)</name>
    <dbReference type="NCBI Taxonomy" id="198804"/>
    <lineage>
        <taxon>Bacteria</taxon>
        <taxon>Pseudomonadati</taxon>
        <taxon>Pseudomonadota</taxon>
        <taxon>Gammaproteobacteria</taxon>
        <taxon>Enterobacterales</taxon>
        <taxon>Erwiniaceae</taxon>
        <taxon>Buchnera</taxon>
    </lineage>
</organism>
<accession>Q8KA22</accession>
<proteinExistence type="inferred from homology"/>
<evidence type="ECO:0000250" key="1"/>
<evidence type="ECO:0000250" key="2">
    <source>
        <dbReference type="UniProtKB" id="P0AFU8"/>
    </source>
</evidence>
<evidence type="ECO:0000250" key="3">
    <source>
        <dbReference type="UniProtKB" id="Q2YN92"/>
    </source>
</evidence>
<dbReference type="EC" id="2.5.1.9"/>
<dbReference type="EMBL" id="AE013218">
    <property type="protein sequence ID" value="AAM67674.1"/>
    <property type="molecule type" value="Genomic_DNA"/>
</dbReference>
<dbReference type="RefSeq" id="WP_011053640.1">
    <property type="nucleotide sequence ID" value="NC_004061.1"/>
</dbReference>
<dbReference type="SMR" id="Q8KA22"/>
<dbReference type="STRING" id="198804.BUsg_104"/>
<dbReference type="GeneID" id="93003574"/>
<dbReference type="KEGG" id="bas:BUsg_104"/>
<dbReference type="eggNOG" id="COG0307">
    <property type="taxonomic scope" value="Bacteria"/>
</dbReference>
<dbReference type="HOGENOM" id="CLU_034388_0_1_6"/>
<dbReference type="UniPathway" id="UPA00275">
    <property type="reaction ID" value="UER00405"/>
</dbReference>
<dbReference type="Proteomes" id="UP000000416">
    <property type="component" value="Chromosome"/>
</dbReference>
<dbReference type="GO" id="GO:0005829">
    <property type="term" value="C:cytosol"/>
    <property type="evidence" value="ECO:0007669"/>
    <property type="project" value="TreeGrafter"/>
</dbReference>
<dbReference type="GO" id="GO:0004746">
    <property type="term" value="F:riboflavin synthase activity"/>
    <property type="evidence" value="ECO:0007669"/>
    <property type="project" value="UniProtKB-EC"/>
</dbReference>
<dbReference type="GO" id="GO:0009231">
    <property type="term" value="P:riboflavin biosynthetic process"/>
    <property type="evidence" value="ECO:0007669"/>
    <property type="project" value="UniProtKB-UniPathway"/>
</dbReference>
<dbReference type="CDD" id="cd00402">
    <property type="entry name" value="Riboflavin_synthase_like"/>
    <property type="match status" value="1"/>
</dbReference>
<dbReference type="FunFam" id="2.40.30.20:FF:000003">
    <property type="entry name" value="Riboflavin synthase, alpha subunit"/>
    <property type="match status" value="1"/>
</dbReference>
<dbReference type="Gene3D" id="2.40.30.20">
    <property type="match status" value="2"/>
</dbReference>
<dbReference type="InterPro" id="IPR023366">
    <property type="entry name" value="ATP_synth_asu-like_sf"/>
</dbReference>
<dbReference type="InterPro" id="IPR001783">
    <property type="entry name" value="Lumazine-bd"/>
</dbReference>
<dbReference type="InterPro" id="IPR026017">
    <property type="entry name" value="Lumazine-bd_dom"/>
</dbReference>
<dbReference type="InterPro" id="IPR017938">
    <property type="entry name" value="Riboflavin_synthase-like_b-brl"/>
</dbReference>
<dbReference type="NCBIfam" id="NF006767">
    <property type="entry name" value="PRK09289.1"/>
    <property type="match status" value="1"/>
</dbReference>
<dbReference type="NCBIfam" id="NF009566">
    <property type="entry name" value="PRK13020.1"/>
    <property type="match status" value="1"/>
</dbReference>
<dbReference type="NCBIfam" id="TIGR00187">
    <property type="entry name" value="ribE"/>
    <property type="match status" value="1"/>
</dbReference>
<dbReference type="PANTHER" id="PTHR21098:SF0">
    <property type="entry name" value="RIBOFLAVIN SYNTHASE"/>
    <property type="match status" value="1"/>
</dbReference>
<dbReference type="PANTHER" id="PTHR21098">
    <property type="entry name" value="RIBOFLAVIN SYNTHASE ALPHA CHAIN"/>
    <property type="match status" value="1"/>
</dbReference>
<dbReference type="Pfam" id="PF00677">
    <property type="entry name" value="Lum_binding"/>
    <property type="match status" value="2"/>
</dbReference>
<dbReference type="PIRSF" id="PIRSF000498">
    <property type="entry name" value="Riboflavin_syn_A"/>
    <property type="match status" value="1"/>
</dbReference>
<dbReference type="SUPFAM" id="SSF63380">
    <property type="entry name" value="Riboflavin synthase domain-like"/>
    <property type="match status" value="2"/>
</dbReference>
<dbReference type="PROSITE" id="PS51177">
    <property type="entry name" value="LUMAZINE_BIND"/>
    <property type="match status" value="2"/>
</dbReference>
<feature type="chain" id="PRO_0000068161" description="Riboflavin synthase">
    <location>
        <begin position="1"/>
        <end position="208"/>
    </location>
</feature>
<feature type="repeat" description="Lumazine-binding 1">
    <location>
        <begin position="1"/>
        <end position="97"/>
    </location>
</feature>
<feature type="repeat" description="Lumazine-binding 2">
    <location>
        <begin position="98"/>
        <end position="195"/>
    </location>
</feature>
<feature type="binding site" evidence="3">
    <location>
        <begin position="4"/>
        <end position="6"/>
    </location>
    <ligand>
        <name>2,4-dihydroxypteridine</name>
        <dbReference type="ChEBI" id="CHEBI:16489"/>
        <label>1</label>
    </ligand>
</feature>
<feature type="binding site" evidence="3">
    <location>
        <begin position="48"/>
        <end position="50"/>
    </location>
    <ligand>
        <name>2,4-dihydroxypteridine</name>
        <dbReference type="ChEBI" id="CHEBI:16489"/>
        <label>2</label>
        <note>ligand shared between two trimeric partners</note>
    </ligand>
</feature>
<feature type="binding site" evidence="2">
    <location>
        <begin position="62"/>
        <end position="67"/>
    </location>
    <ligand>
        <name>2,4-dihydroxypteridine</name>
        <dbReference type="ChEBI" id="CHEBI:16489"/>
        <label>2</label>
        <note>ligand shared between two trimeric partners</note>
    </ligand>
</feature>
<feature type="binding site" evidence="3">
    <location>
        <begin position="101"/>
        <end position="103"/>
    </location>
    <ligand>
        <name>2,4-dihydroxypteridine</name>
        <dbReference type="ChEBI" id="CHEBI:16489"/>
        <label>2</label>
        <note>ligand shared between two trimeric partners</note>
    </ligand>
</feature>
<feature type="binding site" description="in other chain" evidence="3">
    <location>
        <position position="137"/>
    </location>
    <ligand>
        <name>2,4-dihydroxypteridine</name>
        <dbReference type="ChEBI" id="CHEBI:16489"/>
        <label>2</label>
        <note>ligand shared between two trimeric partners</note>
    </ligand>
</feature>
<feature type="binding site" evidence="3">
    <location>
        <begin position="146"/>
        <end position="148"/>
    </location>
    <ligand>
        <name>2,4-dihydroxypteridine</name>
        <dbReference type="ChEBI" id="CHEBI:16489"/>
        <label>1</label>
    </ligand>
</feature>
<feature type="binding site" evidence="3">
    <location>
        <begin position="160"/>
        <end position="165"/>
    </location>
    <ligand>
        <name>2,4-dihydroxypteridine</name>
        <dbReference type="ChEBI" id="CHEBI:16489"/>
        <label>1</label>
    </ligand>
</feature>
<name>RISA_BUCAP</name>
<comment type="function">
    <text evidence="1">Catalyzes the dismutation of two molecules of 6,7-dimethyl-8-ribityllumazine, resulting in the formation of riboflavin and 5-amino-6-(D-ribitylamino)uracil.</text>
</comment>
<comment type="catalytic activity">
    <reaction>
        <text>2 6,7-dimethyl-8-(1-D-ribityl)lumazine + H(+) = 5-amino-6-(D-ribitylamino)uracil + riboflavin</text>
        <dbReference type="Rhea" id="RHEA:20772"/>
        <dbReference type="ChEBI" id="CHEBI:15378"/>
        <dbReference type="ChEBI" id="CHEBI:15934"/>
        <dbReference type="ChEBI" id="CHEBI:57986"/>
        <dbReference type="ChEBI" id="CHEBI:58201"/>
        <dbReference type="EC" id="2.5.1.9"/>
    </reaction>
</comment>
<comment type="pathway">
    <text>Cofactor biosynthesis; riboflavin biosynthesis; riboflavin from 2-hydroxy-3-oxobutyl phosphate and 5-amino-6-(D-ribitylamino)uracil: step 2/2.</text>
</comment>
<comment type="subunit">
    <text evidence="1">Homotrimer.</text>
</comment>
<sequence>MFTGIVNGIARVVSINKKKNFHTYTVNFSSILLKNLKIGDSVAHNGCCLTVKYINCPHVVFDIMKITIANTNLGVLNIGDYVNIERSLKYGDEMGGHIISGHIMNTGEISKISKLDKNYILWCKVKDLSLMKYIFYKGFIAIDGISLTINNIIKNEFCVSIIPETLSSTTIGFKKIGQLVNIEIDFYTQIIVDTTKRLIKKDISTLFK</sequence>
<reference key="1">
    <citation type="journal article" date="2002" name="Science">
        <title>50 million years of genomic stasis in endosymbiotic bacteria.</title>
        <authorList>
            <person name="Tamas I."/>
            <person name="Klasson L."/>
            <person name="Canbaeck B."/>
            <person name="Naeslund A.K."/>
            <person name="Eriksson A.-S."/>
            <person name="Wernegreen J.J."/>
            <person name="Sandstroem J.P."/>
            <person name="Moran N.A."/>
            <person name="Andersson S.G.E."/>
        </authorList>
    </citation>
    <scope>NUCLEOTIDE SEQUENCE [LARGE SCALE GENOMIC DNA]</scope>
    <source>
        <strain>Sg</strain>
    </source>
</reference>